<gene>
    <name type="primary">xap5</name>
    <name type="ORF">SPCC1020.12c</name>
</gene>
<dbReference type="EMBL" id="CU329672">
    <property type="protein sequence ID" value="CAA20659.2"/>
    <property type="molecule type" value="Genomic_DNA"/>
</dbReference>
<dbReference type="RefSeq" id="NP_587947.2">
    <property type="nucleotide sequence ID" value="NM_001022938.2"/>
</dbReference>
<dbReference type="SMR" id="Q7LKZ5"/>
<dbReference type="BioGRID" id="275294">
    <property type="interactions" value="459"/>
</dbReference>
<dbReference type="FunCoup" id="Q7LKZ5">
    <property type="interactions" value="447"/>
</dbReference>
<dbReference type="STRING" id="284812.Q7LKZ5"/>
<dbReference type="iPTMnet" id="Q7LKZ5"/>
<dbReference type="PaxDb" id="4896-SPCC1020.12c.1"/>
<dbReference type="EnsemblFungi" id="SPCC1020.12c.1">
    <property type="protein sequence ID" value="SPCC1020.12c.1:pep"/>
    <property type="gene ID" value="SPCC1020.12c"/>
</dbReference>
<dbReference type="GeneID" id="2538710"/>
<dbReference type="KEGG" id="spo:2538710"/>
<dbReference type="PomBase" id="SPCC1020.12c">
    <property type="gene designation" value="xap5"/>
</dbReference>
<dbReference type="VEuPathDB" id="FungiDB:SPCC1020.12c"/>
<dbReference type="eggNOG" id="KOG2894">
    <property type="taxonomic scope" value="Eukaryota"/>
</dbReference>
<dbReference type="HOGENOM" id="CLU_037985_1_0_1"/>
<dbReference type="InParanoid" id="Q7LKZ5"/>
<dbReference type="OMA" id="DFIWVFL"/>
<dbReference type="PhylomeDB" id="Q7LKZ5"/>
<dbReference type="PRO" id="PR:Q7LKZ5"/>
<dbReference type="Proteomes" id="UP000002485">
    <property type="component" value="Chromosome III"/>
</dbReference>
<dbReference type="GO" id="GO:0000785">
    <property type="term" value="C:chromatin"/>
    <property type="evidence" value="ECO:0000314"/>
    <property type="project" value="PomBase"/>
</dbReference>
<dbReference type="GO" id="GO:0005634">
    <property type="term" value="C:nucleus"/>
    <property type="evidence" value="ECO:0007005"/>
    <property type="project" value="PomBase"/>
</dbReference>
<dbReference type="GO" id="GO:0006325">
    <property type="term" value="P:chromatin organization"/>
    <property type="evidence" value="ECO:0000315"/>
    <property type="project" value="PomBase"/>
</dbReference>
<dbReference type="GO" id="GO:0045292">
    <property type="term" value="P:mRNA cis splicing, via spliceosome"/>
    <property type="evidence" value="ECO:0000250"/>
    <property type="project" value="PomBase"/>
</dbReference>
<dbReference type="InterPro" id="IPR048337">
    <property type="entry name" value="FAM50A/XAP5_C"/>
</dbReference>
<dbReference type="InterPro" id="IPR007005">
    <property type="entry name" value="XAP5"/>
</dbReference>
<dbReference type="PANTHER" id="PTHR12722:SF0">
    <property type="entry name" value="PROTEIN FAM50A"/>
    <property type="match status" value="1"/>
</dbReference>
<dbReference type="PANTHER" id="PTHR12722">
    <property type="entry name" value="XAP-5 PROTEIN-RELATED"/>
    <property type="match status" value="1"/>
</dbReference>
<dbReference type="Pfam" id="PF04921">
    <property type="entry name" value="XAP5"/>
    <property type="match status" value="1"/>
</dbReference>
<keyword id="KW-0539">Nucleus</keyword>
<keyword id="KW-1185">Reference proteome</keyword>
<name>FAM50_SCHPO</name>
<proteinExistence type="inferred from homology"/>
<comment type="subcellular location">
    <subcellularLocation>
        <location evidence="1">Nucleus</location>
    </subcellularLocation>
</comment>
<comment type="similarity">
    <text evidence="2">Belongs to the FAM50 family.</text>
</comment>
<sequence length="288" mass="33817">MSGHTDADEIHEILRNSTTGLVHLKDYQRVKQNIVEKREKHALSTTSTKIKKRKDALSKKVKQGIKVNKGKLSFGEDEELENDDLPLKKVEKKMFMGKDPSADTSFLPDAEREIRENAKRAEYRKQWLKEQEQIREKEILIPFIYYDGTSTTYHVRTRLKDSVGHFLADMKQQIPFLKRILDMDKFLLVQSDLIIPHHHELYYFYINKVQGRDGLLFDFDKLSCSSPEMVATTQLPSQCIPHLVQKSYYLQNRHVFPCVHWEVFDSRKDYSLEKHATDPNAALFYRPS</sequence>
<protein>
    <recommendedName>
        <fullName>FAM50 family protein C1020.12c</fullName>
    </recommendedName>
</protein>
<feature type="chain" id="PRO_0000352811" description="FAM50 family protein C1020.12c">
    <location>
        <begin position="1"/>
        <end position="288"/>
    </location>
</feature>
<accession>Q7LKZ5</accession>
<reference key="1">
    <citation type="journal article" date="2002" name="Nature">
        <title>The genome sequence of Schizosaccharomyces pombe.</title>
        <authorList>
            <person name="Wood V."/>
            <person name="Gwilliam R."/>
            <person name="Rajandream M.A."/>
            <person name="Lyne M.H."/>
            <person name="Lyne R."/>
            <person name="Stewart A."/>
            <person name="Sgouros J.G."/>
            <person name="Peat N."/>
            <person name="Hayles J."/>
            <person name="Baker S.G."/>
            <person name="Basham D."/>
            <person name="Bowman S."/>
            <person name="Brooks K."/>
            <person name="Brown D."/>
            <person name="Brown S."/>
            <person name="Chillingworth T."/>
            <person name="Churcher C.M."/>
            <person name="Collins M."/>
            <person name="Connor R."/>
            <person name="Cronin A."/>
            <person name="Davis P."/>
            <person name="Feltwell T."/>
            <person name="Fraser A."/>
            <person name="Gentles S."/>
            <person name="Goble A."/>
            <person name="Hamlin N."/>
            <person name="Harris D.E."/>
            <person name="Hidalgo J."/>
            <person name="Hodgson G."/>
            <person name="Holroyd S."/>
            <person name="Hornsby T."/>
            <person name="Howarth S."/>
            <person name="Huckle E.J."/>
            <person name="Hunt S."/>
            <person name="Jagels K."/>
            <person name="James K.D."/>
            <person name="Jones L."/>
            <person name="Jones M."/>
            <person name="Leather S."/>
            <person name="McDonald S."/>
            <person name="McLean J."/>
            <person name="Mooney P."/>
            <person name="Moule S."/>
            <person name="Mungall K.L."/>
            <person name="Murphy L.D."/>
            <person name="Niblett D."/>
            <person name="Odell C."/>
            <person name="Oliver K."/>
            <person name="O'Neil S."/>
            <person name="Pearson D."/>
            <person name="Quail M.A."/>
            <person name="Rabbinowitsch E."/>
            <person name="Rutherford K.M."/>
            <person name="Rutter S."/>
            <person name="Saunders D."/>
            <person name="Seeger K."/>
            <person name="Sharp S."/>
            <person name="Skelton J."/>
            <person name="Simmonds M.N."/>
            <person name="Squares R."/>
            <person name="Squares S."/>
            <person name="Stevens K."/>
            <person name="Taylor K."/>
            <person name="Taylor R.G."/>
            <person name="Tivey A."/>
            <person name="Walsh S.V."/>
            <person name="Warren T."/>
            <person name="Whitehead S."/>
            <person name="Woodward J.R."/>
            <person name="Volckaert G."/>
            <person name="Aert R."/>
            <person name="Robben J."/>
            <person name="Grymonprez B."/>
            <person name="Weltjens I."/>
            <person name="Vanstreels E."/>
            <person name="Rieger M."/>
            <person name="Schaefer M."/>
            <person name="Mueller-Auer S."/>
            <person name="Gabel C."/>
            <person name="Fuchs M."/>
            <person name="Duesterhoeft A."/>
            <person name="Fritzc C."/>
            <person name="Holzer E."/>
            <person name="Moestl D."/>
            <person name="Hilbert H."/>
            <person name="Borzym K."/>
            <person name="Langer I."/>
            <person name="Beck A."/>
            <person name="Lehrach H."/>
            <person name="Reinhardt R."/>
            <person name="Pohl T.M."/>
            <person name="Eger P."/>
            <person name="Zimmermann W."/>
            <person name="Wedler H."/>
            <person name="Wambutt R."/>
            <person name="Purnelle B."/>
            <person name="Goffeau A."/>
            <person name="Cadieu E."/>
            <person name="Dreano S."/>
            <person name="Gloux S."/>
            <person name="Lelaure V."/>
            <person name="Mottier S."/>
            <person name="Galibert F."/>
            <person name="Aves S.J."/>
            <person name="Xiang Z."/>
            <person name="Hunt C."/>
            <person name="Moore K."/>
            <person name="Hurst S.M."/>
            <person name="Lucas M."/>
            <person name="Rochet M."/>
            <person name="Gaillardin C."/>
            <person name="Tallada V.A."/>
            <person name="Garzon A."/>
            <person name="Thode G."/>
            <person name="Daga R.R."/>
            <person name="Cruzado L."/>
            <person name="Jimenez J."/>
            <person name="Sanchez M."/>
            <person name="del Rey F."/>
            <person name="Benito J."/>
            <person name="Dominguez A."/>
            <person name="Revuelta J.L."/>
            <person name="Moreno S."/>
            <person name="Armstrong J."/>
            <person name="Forsburg S.L."/>
            <person name="Cerutti L."/>
            <person name="Lowe T."/>
            <person name="McCombie W.R."/>
            <person name="Paulsen I."/>
            <person name="Potashkin J."/>
            <person name="Shpakovski G.V."/>
            <person name="Ussery D."/>
            <person name="Barrell B.G."/>
            <person name="Nurse P."/>
        </authorList>
    </citation>
    <scope>NUCLEOTIDE SEQUENCE [LARGE SCALE GENOMIC DNA]</scope>
    <source>
        <strain>972 / ATCC 24843</strain>
    </source>
</reference>
<reference key="2">
    <citation type="journal article" date="2006" name="Nat. Biotechnol.">
        <title>ORFeome cloning and global analysis of protein localization in the fission yeast Schizosaccharomyces pombe.</title>
        <authorList>
            <person name="Matsuyama A."/>
            <person name="Arai R."/>
            <person name="Yashiroda Y."/>
            <person name="Shirai A."/>
            <person name="Kamata A."/>
            <person name="Sekido S."/>
            <person name="Kobayashi Y."/>
            <person name="Hashimoto A."/>
            <person name="Hamamoto M."/>
            <person name="Hiraoka Y."/>
            <person name="Horinouchi S."/>
            <person name="Yoshida M."/>
        </authorList>
    </citation>
    <scope>SUBCELLULAR LOCATION [LARGE SCALE ANALYSIS]</scope>
</reference>
<evidence type="ECO:0000269" key="1">
    <source>
    </source>
</evidence>
<evidence type="ECO:0000305" key="2"/>
<organism>
    <name type="scientific">Schizosaccharomyces pombe (strain 972 / ATCC 24843)</name>
    <name type="common">Fission yeast</name>
    <dbReference type="NCBI Taxonomy" id="284812"/>
    <lineage>
        <taxon>Eukaryota</taxon>
        <taxon>Fungi</taxon>
        <taxon>Dikarya</taxon>
        <taxon>Ascomycota</taxon>
        <taxon>Taphrinomycotina</taxon>
        <taxon>Schizosaccharomycetes</taxon>
        <taxon>Schizosaccharomycetales</taxon>
        <taxon>Schizosaccharomycetaceae</taxon>
        <taxon>Schizosaccharomyces</taxon>
    </lineage>
</organism>